<dbReference type="EC" id="3.1.3.2"/>
<dbReference type="EMBL" id="CU329671">
    <property type="protein sequence ID" value="CAA18863.1"/>
    <property type="molecule type" value="Genomic_DNA"/>
</dbReference>
<dbReference type="PIR" id="T39929">
    <property type="entry name" value="T39929"/>
</dbReference>
<dbReference type="RefSeq" id="NP_595928.1">
    <property type="nucleotide sequence ID" value="NM_001021836.2"/>
</dbReference>
<dbReference type="SMR" id="O60172"/>
<dbReference type="FunCoup" id="O60172">
    <property type="interactions" value="222"/>
</dbReference>
<dbReference type="STRING" id="284812.O60172"/>
<dbReference type="iPTMnet" id="O60172"/>
<dbReference type="PaxDb" id="4896-SPBC21H7.03c.1"/>
<dbReference type="EnsemblFungi" id="SPBC21H7.03c.1">
    <property type="protein sequence ID" value="SPBC21H7.03c.1:pep"/>
    <property type="gene ID" value="SPBC21H7.03c"/>
</dbReference>
<dbReference type="KEGG" id="spo:2540420"/>
<dbReference type="PomBase" id="SPBC21H7.03c"/>
<dbReference type="VEuPathDB" id="FungiDB:SPBC21H7.03c"/>
<dbReference type="eggNOG" id="KOG1382">
    <property type="taxonomic scope" value="Eukaryota"/>
</dbReference>
<dbReference type="HOGENOM" id="CLU_020880_0_1_1"/>
<dbReference type="InParanoid" id="O60172"/>
<dbReference type="OMA" id="WCAAFTR"/>
<dbReference type="PhylomeDB" id="O60172"/>
<dbReference type="PRO" id="PR:O60172"/>
<dbReference type="Proteomes" id="UP000002485">
    <property type="component" value="Chromosome II"/>
</dbReference>
<dbReference type="GO" id="GO:0005576">
    <property type="term" value="C:extracellular region"/>
    <property type="evidence" value="ECO:0000303"/>
    <property type="project" value="PomBase"/>
</dbReference>
<dbReference type="GO" id="GO:0003993">
    <property type="term" value="F:acid phosphatase activity"/>
    <property type="evidence" value="ECO:0000318"/>
    <property type="project" value="GO_Central"/>
</dbReference>
<dbReference type="GO" id="GO:0052745">
    <property type="term" value="F:inositol phosphate phosphatase activity"/>
    <property type="evidence" value="ECO:0000250"/>
    <property type="project" value="PomBase"/>
</dbReference>
<dbReference type="GO" id="GO:0006112">
    <property type="term" value="P:energy reserve metabolic process"/>
    <property type="evidence" value="ECO:0000303"/>
    <property type="project" value="PomBase"/>
</dbReference>
<dbReference type="GO" id="GO:0043647">
    <property type="term" value="P:inositol phosphate metabolic process"/>
    <property type="evidence" value="ECO:0000250"/>
    <property type="project" value="PomBase"/>
</dbReference>
<dbReference type="GO" id="GO:0046434">
    <property type="term" value="P:organophosphate catabolic process"/>
    <property type="evidence" value="ECO:0000250"/>
    <property type="project" value="PomBase"/>
</dbReference>
<dbReference type="CDD" id="cd07061">
    <property type="entry name" value="HP_HAP_like"/>
    <property type="match status" value="1"/>
</dbReference>
<dbReference type="FunFam" id="3.40.50.1240:FF:000119">
    <property type="entry name" value="Thiamine-repressible acid phosphatase SPBC21H7.03c"/>
    <property type="match status" value="1"/>
</dbReference>
<dbReference type="Gene3D" id="3.40.50.1240">
    <property type="entry name" value="Phosphoglycerate mutase-like"/>
    <property type="match status" value="1"/>
</dbReference>
<dbReference type="InterPro" id="IPR033379">
    <property type="entry name" value="Acid_Pase_AS"/>
</dbReference>
<dbReference type="InterPro" id="IPR000560">
    <property type="entry name" value="His_Pase_clade-2"/>
</dbReference>
<dbReference type="InterPro" id="IPR029033">
    <property type="entry name" value="His_PPase_superfam"/>
</dbReference>
<dbReference type="InterPro" id="IPR016274">
    <property type="entry name" value="Histidine_acid_Pase_euk"/>
</dbReference>
<dbReference type="PANTHER" id="PTHR20963:SF18">
    <property type="entry name" value="ACID PHOSPHATASE PHO11-RELATED"/>
    <property type="match status" value="1"/>
</dbReference>
<dbReference type="PANTHER" id="PTHR20963">
    <property type="entry name" value="MULTIPLE INOSITOL POLYPHOSPHATE PHOSPHATASE-RELATED"/>
    <property type="match status" value="1"/>
</dbReference>
<dbReference type="Pfam" id="PF00328">
    <property type="entry name" value="His_Phos_2"/>
    <property type="match status" value="1"/>
</dbReference>
<dbReference type="PIRSF" id="PIRSF000894">
    <property type="entry name" value="Acid_phosphatase"/>
    <property type="match status" value="1"/>
</dbReference>
<dbReference type="SUPFAM" id="SSF53254">
    <property type="entry name" value="Phosphoglycerate mutase-like"/>
    <property type="match status" value="1"/>
</dbReference>
<dbReference type="PROSITE" id="PS00616">
    <property type="entry name" value="HIS_ACID_PHOSPHAT_1"/>
    <property type="match status" value="1"/>
</dbReference>
<dbReference type="PROSITE" id="PS00778">
    <property type="entry name" value="HIS_ACID_PHOSPHAT_2"/>
    <property type="match status" value="1"/>
</dbReference>
<reference evidence="7" key="1">
    <citation type="journal article" date="2002" name="Nature">
        <title>The genome sequence of Schizosaccharomyces pombe.</title>
        <authorList>
            <person name="Wood V."/>
            <person name="Gwilliam R."/>
            <person name="Rajandream M.A."/>
            <person name="Lyne M.H."/>
            <person name="Lyne R."/>
            <person name="Stewart A."/>
            <person name="Sgouros J.G."/>
            <person name="Peat N."/>
            <person name="Hayles J."/>
            <person name="Baker S.G."/>
            <person name="Basham D."/>
            <person name="Bowman S."/>
            <person name="Brooks K."/>
            <person name="Brown D."/>
            <person name="Brown S."/>
            <person name="Chillingworth T."/>
            <person name="Churcher C.M."/>
            <person name="Collins M."/>
            <person name="Connor R."/>
            <person name="Cronin A."/>
            <person name="Davis P."/>
            <person name="Feltwell T."/>
            <person name="Fraser A."/>
            <person name="Gentles S."/>
            <person name="Goble A."/>
            <person name="Hamlin N."/>
            <person name="Harris D.E."/>
            <person name="Hidalgo J."/>
            <person name="Hodgson G."/>
            <person name="Holroyd S."/>
            <person name="Hornsby T."/>
            <person name="Howarth S."/>
            <person name="Huckle E.J."/>
            <person name="Hunt S."/>
            <person name="Jagels K."/>
            <person name="James K.D."/>
            <person name="Jones L."/>
            <person name="Jones M."/>
            <person name="Leather S."/>
            <person name="McDonald S."/>
            <person name="McLean J."/>
            <person name="Mooney P."/>
            <person name="Moule S."/>
            <person name="Mungall K.L."/>
            <person name="Murphy L.D."/>
            <person name="Niblett D."/>
            <person name="Odell C."/>
            <person name="Oliver K."/>
            <person name="O'Neil S."/>
            <person name="Pearson D."/>
            <person name="Quail M.A."/>
            <person name="Rabbinowitsch E."/>
            <person name="Rutherford K.M."/>
            <person name="Rutter S."/>
            <person name="Saunders D."/>
            <person name="Seeger K."/>
            <person name="Sharp S."/>
            <person name="Skelton J."/>
            <person name="Simmonds M.N."/>
            <person name="Squares R."/>
            <person name="Squares S."/>
            <person name="Stevens K."/>
            <person name="Taylor K."/>
            <person name="Taylor R.G."/>
            <person name="Tivey A."/>
            <person name="Walsh S.V."/>
            <person name="Warren T."/>
            <person name="Whitehead S."/>
            <person name="Woodward J.R."/>
            <person name="Volckaert G."/>
            <person name="Aert R."/>
            <person name="Robben J."/>
            <person name="Grymonprez B."/>
            <person name="Weltjens I."/>
            <person name="Vanstreels E."/>
            <person name="Rieger M."/>
            <person name="Schaefer M."/>
            <person name="Mueller-Auer S."/>
            <person name="Gabel C."/>
            <person name="Fuchs M."/>
            <person name="Duesterhoeft A."/>
            <person name="Fritzc C."/>
            <person name="Holzer E."/>
            <person name="Moestl D."/>
            <person name="Hilbert H."/>
            <person name="Borzym K."/>
            <person name="Langer I."/>
            <person name="Beck A."/>
            <person name="Lehrach H."/>
            <person name="Reinhardt R."/>
            <person name="Pohl T.M."/>
            <person name="Eger P."/>
            <person name="Zimmermann W."/>
            <person name="Wedler H."/>
            <person name="Wambutt R."/>
            <person name="Purnelle B."/>
            <person name="Goffeau A."/>
            <person name="Cadieu E."/>
            <person name="Dreano S."/>
            <person name="Gloux S."/>
            <person name="Lelaure V."/>
            <person name="Mottier S."/>
            <person name="Galibert F."/>
            <person name="Aves S.J."/>
            <person name="Xiang Z."/>
            <person name="Hunt C."/>
            <person name="Moore K."/>
            <person name="Hurst S.M."/>
            <person name="Lucas M."/>
            <person name="Rochet M."/>
            <person name="Gaillardin C."/>
            <person name="Tallada V.A."/>
            <person name="Garzon A."/>
            <person name="Thode G."/>
            <person name="Daga R.R."/>
            <person name="Cruzado L."/>
            <person name="Jimenez J."/>
            <person name="Sanchez M."/>
            <person name="del Rey F."/>
            <person name="Benito J."/>
            <person name="Dominguez A."/>
            <person name="Revuelta J.L."/>
            <person name="Moreno S."/>
            <person name="Armstrong J."/>
            <person name="Forsburg S.L."/>
            <person name="Cerutti L."/>
            <person name="Lowe T."/>
            <person name="McCombie W.R."/>
            <person name="Paulsen I."/>
            <person name="Potashkin J."/>
            <person name="Shpakovski G.V."/>
            <person name="Ussery D."/>
            <person name="Barrell B.G."/>
            <person name="Nurse P."/>
        </authorList>
    </citation>
    <scope>NUCLEOTIDE SEQUENCE [LARGE SCALE GENOMIC DNA]</scope>
    <source>
        <strain>972 / ATCC 24843</strain>
    </source>
</reference>
<reference evidence="6" key="2">
    <citation type="journal article" date="2005" name="Eukaryot. Cell">
        <title>Activation of AP-1-dependent transcription by a truncated translation initiation factor.</title>
        <authorList>
            <person name="Jenkins C.C.L."/>
            <person name="Mata J."/>
            <person name="Crane R.F."/>
            <person name="Thomas B."/>
            <person name="Akoulitchev A."/>
            <person name="Baehler J."/>
            <person name="Norbury C.J."/>
        </authorList>
    </citation>
    <scope>INDUCTION</scope>
</reference>
<protein>
    <recommendedName>
        <fullName>Thiamine-repressible acid phosphatase SPBC21H7.03c</fullName>
        <ecNumber>3.1.3.2</ecNumber>
    </recommendedName>
</protein>
<accession>O60172</accession>
<name>PPA3_SCHPO</name>
<comment type="function">
    <text evidence="3">May dephosphorylate thiamine phosphates.</text>
</comment>
<comment type="catalytic activity">
    <reaction evidence="3">
        <text>a phosphate monoester + H2O = an alcohol + phosphate</text>
        <dbReference type="Rhea" id="RHEA:15017"/>
        <dbReference type="ChEBI" id="CHEBI:15377"/>
        <dbReference type="ChEBI" id="CHEBI:30879"/>
        <dbReference type="ChEBI" id="CHEBI:43474"/>
        <dbReference type="ChEBI" id="CHEBI:67140"/>
        <dbReference type="EC" id="3.1.3.2"/>
    </reaction>
</comment>
<comment type="subcellular location">
    <subcellularLocation>
        <location evidence="3">Secreted</location>
        <location evidence="3">Cell wall</location>
    </subcellularLocation>
</comment>
<comment type="induction">
    <text evidence="5">Repressed by thiamine.</text>
</comment>
<comment type="similarity">
    <text evidence="4">Belongs to the histidine acid phosphatase family.</text>
</comment>
<keyword id="KW-0134">Cell wall</keyword>
<keyword id="KW-0325">Glycoprotein</keyword>
<keyword id="KW-0378">Hydrolase</keyword>
<keyword id="KW-1185">Reference proteome</keyword>
<keyword id="KW-0964">Secreted</keyword>
<keyword id="KW-0732">Signal</keyword>
<evidence type="ECO:0000250" key="1">
    <source>
        <dbReference type="UniProtKB" id="P07102"/>
    </source>
</evidence>
<evidence type="ECO:0000250" key="2">
    <source>
        <dbReference type="UniProtKB" id="P15309"/>
    </source>
</evidence>
<evidence type="ECO:0000250" key="3">
    <source>
        <dbReference type="UniProtKB" id="Q01682"/>
    </source>
</evidence>
<evidence type="ECO:0000255" key="4"/>
<evidence type="ECO:0000269" key="5">
    <source>
    </source>
</evidence>
<evidence type="ECO:0000305" key="6"/>
<evidence type="ECO:0000312" key="7">
    <source>
        <dbReference type="EMBL" id="CAA18863.1"/>
    </source>
</evidence>
<sequence length="463" mass="52759">MQLCIISLWFLAAFIVNADNVQFEDYESNFFFKEHLGTLSPYHEPYFDGLDSAFPETCEIQQVHLLQRHGSRNPTGDVTATDVYSSQYLNNFQEKLLNGSIPVNFSYPENPLCFIKQWTPVIDAENADQLSSRGRLELFDLGRQLYQRYYKLFDSYVYDINTAEQERVVESAKWFTYGLFGDKMYEKTNFILISEGKAAGANSLSMYNACPVFKDNNFHKNATDAAHAVWRNIFIEPIVNRLAKYFDSSYKLTINDVRSLFYICEYEIAIKDHSDFCSIFTPSEFLNFEYDSDLDQAYGGGPVSEWASTLGGAYINNLADSLRNVTNPDFDRKVFLAFTHDSNIIPVEAALGFFPDITPQNPLPTDKNIYTYSQKTSSFVPFAGNLITELFFCSDSKYYVRHLVNQQVYPLIDCGYGPSGTSDGLCELQAYLNSPIRANSTSNGISIFNTECQARPTNVTIYF</sequence>
<gene>
    <name type="ORF">SPBC21H7.03c</name>
</gene>
<proteinExistence type="evidence at transcript level"/>
<feature type="signal peptide" evidence="4">
    <location>
        <begin position="1"/>
        <end position="18"/>
    </location>
</feature>
<feature type="chain" id="PRO_0000311718" description="Thiamine-repressible acid phosphatase SPBC21H7.03c">
    <location>
        <begin position="19"/>
        <end position="463"/>
    </location>
</feature>
<feature type="active site" description="Nucleophile" evidence="1">
    <location>
        <position position="69"/>
    </location>
</feature>
<feature type="active site" description="Proton donor" evidence="2">
    <location>
        <position position="341"/>
    </location>
</feature>
<feature type="glycosylation site" description="N-linked (GlcNAc...) asparagine" evidence="4">
    <location>
        <position position="98"/>
    </location>
</feature>
<feature type="glycosylation site" description="N-linked (GlcNAc...) asparagine" evidence="4">
    <location>
        <position position="104"/>
    </location>
</feature>
<feature type="glycosylation site" description="N-linked (GlcNAc...) asparagine" evidence="4">
    <location>
        <position position="221"/>
    </location>
</feature>
<feature type="glycosylation site" description="N-linked (GlcNAc...) asparagine" evidence="4">
    <location>
        <position position="324"/>
    </location>
</feature>
<feature type="glycosylation site" description="N-linked (GlcNAc...) asparagine" evidence="4">
    <location>
        <position position="439"/>
    </location>
</feature>
<feature type="glycosylation site" description="N-linked (GlcNAc...) asparagine" evidence="4">
    <location>
        <position position="458"/>
    </location>
</feature>
<organism>
    <name type="scientific">Schizosaccharomyces pombe (strain 972 / ATCC 24843)</name>
    <name type="common">Fission yeast</name>
    <dbReference type="NCBI Taxonomy" id="284812"/>
    <lineage>
        <taxon>Eukaryota</taxon>
        <taxon>Fungi</taxon>
        <taxon>Dikarya</taxon>
        <taxon>Ascomycota</taxon>
        <taxon>Taphrinomycotina</taxon>
        <taxon>Schizosaccharomycetes</taxon>
        <taxon>Schizosaccharomycetales</taxon>
        <taxon>Schizosaccharomycetaceae</taxon>
        <taxon>Schizosaccharomyces</taxon>
    </lineage>
</organism>